<keyword id="KW-0255">Endonuclease</keyword>
<keyword id="KW-0378">Hydrolase</keyword>
<keyword id="KW-0479">Metal-binding</keyword>
<keyword id="KW-0540">Nuclease</keyword>
<keyword id="KW-1185">Reference proteome</keyword>
<keyword id="KW-0819">tRNA processing</keyword>
<keyword id="KW-0862">Zinc</keyword>
<gene>
    <name evidence="1" type="primary">rnz</name>
    <name type="ordered locus">Rv2407</name>
    <name type="ORF">MTCY253.13c</name>
</gene>
<protein>
    <recommendedName>
        <fullName evidence="1">Ribonuclease Z</fullName>
        <shortName evidence="1">RNase Z</shortName>
        <ecNumber evidence="1">3.1.26.11</ecNumber>
    </recommendedName>
    <alternativeName>
        <fullName evidence="1">tRNA 3 endonuclease</fullName>
    </alternativeName>
    <alternativeName>
        <fullName evidence="1">tRNase Z</fullName>
    </alternativeName>
</protein>
<organism>
    <name type="scientific">Mycobacterium tuberculosis (strain ATCC 25618 / H37Rv)</name>
    <dbReference type="NCBI Taxonomy" id="83332"/>
    <lineage>
        <taxon>Bacteria</taxon>
        <taxon>Bacillati</taxon>
        <taxon>Actinomycetota</taxon>
        <taxon>Actinomycetes</taxon>
        <taxon>Mycobacteriales</taxon>
        <taxon>Mycobacteriaceae</taxon>
        <taxon>Mycobacterium</taxon>
        <taxon>Mycobacterium tuberculosis complex</taxon>
    </lineage>
</organism>
<comment type="function">
    <text evidence="1">Zinc phosphodiesterase, which displays some tRNA 3'-processing endonuclease activity. Probably involved in tRNA maturation, by removing a 3'-trailer from precursor tRNA.</text>
</comment>
<comment type="catalytic activity">
    <reaction evidence="1">
        <text>Endonucleolytic cleavage of RNA, removing extra 3' nucleotides from tRNA precursor, generating 3' termini of tRNAs. A 3'-hydroxy group is left at the tRNA terminus and a 5'-phosphoryl group is left at the trailer molecule.</text>
        <dbReference type="EC" id="3.1.26.11"/>
    </reaction>
</comment>
<comment type="cofactor">
    <cofactor evidence="1">
        <name>Zn(2+)</name>
        <dbReference type="ChEBI" id="CHEBI:29105"/>
    </cofactor>
    <text evidence="1">Binds 2 Zn(2+) ions.</text>
</comment>
<comment type="subunit">
    <text evidence="1">Homodimer.</text>
</comment>
<comment type="similarity">
    <text evidence="1">Belongs to the RNase Z family.</text>
</comment>
<comment type="caution">
    <text evidence="2">Lacks two conserved zinc binding sites.</text>
</comment>
<name>RNZ_MYCTU</name>
<reference key="1">
    <citation type="journal article" date="1998" name="Nature">
        <title>Deciphering the biology of Mycobacterium tuberculosis from the complete genome sequence.</title>
        <authorList>
            <person name="Cole S.T."/>
            <person name="Brosch R."/>
            <person name="Parkhill J."/>
            <person name="Garnier T."/>
            <person name="Churcher C.M."/>
            <person name="Harris D.E."/>
            <person name="Gordon S.V."/>
            <person name="Eiglmeier K."/>
            <person name="Gas S."/>
            <person name="Barry C.E. III"/>
            <person name="Tekaia F."/>
            <person name="Badcock K."/>
            <person name="Basham D."/>
            <person name="Brown D."/>
            <person name="Chillingworth T."/>
            <person name="Connor R."/>
            <person name="Davies R.M."/>
            <person name="Devlin K."/>
            <person name="Feltwell T."/>
            <person name="Gentles S."/>
            <person name="Hamlin N."/>
            <person name="Holroyd S."/>
            <person name="Hornsby T."/>
            <person name="Jagels K."/>
            <person name="Krogh A."/>
            <person name="McLean J."/>
            <person name="Moule S."/>
            <person name="Murphy L.D."/>
            <person name="Oliver S."/>
            <person name="Osborne J."/>
            <person name="Quail M.A."/>
            <person name="Rajandream M.A."/>
            <person name="Rogers J."/>
            <person name="Rutter S."/>
            <person name="Seeger K."/>
            <person name="Skelton S."/>
            <person name="Squares S."/>
            <person name="Squares R."/>
            <person name="Sulston J.E."/>
            <person name="Taylor K."/>
            <person name="Whitehead S."/>
            <person name="Barrell B.G."/>
        </authorList>
    </citation>
    <scope>NUCLEOTIDE SEQUENCE [LARGE SCALE GENOMIC DNA]</scope>
    <source>
        <strain>ATCC 25618 / H37Rv</strain>
    </source>
</reference>
<accession>P9WGZ5</accession>
<accession>L0TB48</accession>
<accession>P71736</accession>
<accession>Q8VJJ4</accession>
<feature type="chain" id="PRO_0000155879" description="Ribonuclease Z">
    <location>
        <begin position="1"/>
        <end position="273"/>
    </location>
</feature>
<feature type="binding site" evidence="1">
    <location>
        <position position="61"/>
    </location>
    <ligand>
        <name>Zn(2+)</name>
        <dbReference type="ChEBI" id="CHEBI:29105"/>
        <label>1</label>
        <note>catalytic</note>
    </ligand>
</feature>
<feature type="binding site" evidence="1">
    <location>
        <position position="63"/>
    </location>
    <ligand>
        <name>Zn(2+)</name>
        <dbReference type="ChEBI" id="CHEBI:29105"/>
        <label>1</label>
        <note>catalytic</note>
    </ligand>
</feature>
<feature type="binding site" evidence="1">
    <location>
        <position position="146"/>
    </location>
    <ligand>
        <name>Zn(2+)</name>
        <dbReference type="ChEBI" id="CHEBI:29105"/>
        <label>1</label>
        <note>catalytic</note>
    </ligand>
</feature>
<feature type="binding site" evidence="1">
    <location>
        <position position="169"/>
    </location>
    <ligand>
        <name>Zn(2+)</name>
        <dbReference type="ChEBI" id="CHEBI:29105"/>
        <label>1</label>
        <note>catalytic</note>
    </ligand>
</feature>
<feature type="binding site" evidence="1">
    <location>
        <position position="169"/>
    </location>
    <ligand>
        <name>Zn(2+)</name>
        <dbReference type="ChEBI" id="CHEBI:29105"/>
        <label>2</label>
        <note>catalytic</note>
    </ligand>
</feature>
<feature type="binding site" evidence="1">
    <location>
        <position position="233"/>
    </location>
    <ligand>
        <name>Zn(2+)</name>
        <dbReference type="ChEBI" id="CHEBI:29105"/>
        <label>2</label>
        <note>catalytic</note>
    </ligand>
</feature>
<evidence type="ECO:0000255" key="1">
    <source>
        <dbReference type="HAMAP-Rule" id="MF_01818"/>
    </source>
</evidence>
<evidence type="ECO:0000305" key="2"/>
<dbReference type="EC" id="3.1.26.11" evidence="1"/>
<dbReference type="EMBL" id="AL123456">
    <property type="protein sequence ID" value="CCP45198.1"/>
    <property type="molecule type" value="Genomic_DNA"/>
</dbReference>
<dbReference type="PIR" id="B70684">
    <property type="entry name" value="B70684"/>
</dbReference>
<dbReference type="RefSeq" id="NP_216923.1">
    <property type="nucleotide sequence ID" value="NC_000962.3"/>
</dbReference>
<dbReference type="RefSeq" id="WP_003911863.1">
    <property type="nucleotide sequence ID" value="NZ_NVQJ01000054.1"/>
</dbReference>
<dbReference type="SMR" id="P9WGZ5"/>
<dbReference type="FunCoup" id="P9WGZ5">
    <property type="interactions" value="11"/>
</dbReference>
<dbReference type="STRING" id="83332.Rv2407"/>
<dbReference type="PaxDb" id="83332-Rv2407"/>
<dbReference type="DNASU" id="885684"/>
<dbReference type="GeneID" id="885684"/>
<dbReference type="KEGG" id="mtu:Rv2407"/>
<dbReference type="KEGG" id="mtv:RVBD_2407"/>
<dbReference type="TubercuList" id="Rv2407"/>
<dbReference type="eggNOG" id="COG1234">
    <property type="taxonomic scope" value="Bacteria"/>
</dbReference>
<dbReference type="InParanoid" id="P9WGZ5"/>
<dbReference type="OrthoDB" id="4137979at2"/>
<dbReference type="PhylomeDB" id="P9WGZ5"/>
<dbReference type="Proteomes" id="UP000001584">
    <property type="component" value="Chromosome"/>
</dbReference>
<dbReference type="GO" id="GO:0042781">
    <property type="term" value="F:3'-tRNA processing endoribonuclease activity"/>
    <property type="evidence" value="ECO:0000318"/>
    <property type="project" value="GO_Central"/>
</dbReference>
<dbReference type="GO" id="GO:0046872">
    <property type="term" value="F:metal ion binding"/>
    <property type="evidence" value="ECO:0007669"/>
    <property type="project" value="UniProtKB-KW"/>
</dbReference>
<dbReference type="CDD" id="cd07719">
    <property type="entry name" value="arylsulfatase_AtsA-like_MBL-fold"/>
    <property type="match status" value="1"/>
</dbReference>
<dbReference type="Gene3D" id="3.60.15.10">
    <property type="entry name" value="Ribonuclease Z/Hydroxyacylglutathione hydrolase-like"/>
    <property type="match status" value="1"/>
</dbReference>
<dbReference type="HAMAP" id="MF_01818">
    <property type="entry name" value="RNase_Z_BN"/>
    <property type="match status" value="1"/>
</dbReference>
<dbReference type="InterPro" id="IPR044094">
    <property type="entry name" value="AtsA-like_MBL-fold"/>
</dbReference>
<dbReference type="InterPro" id="IPR001279">
    <property type="entry name" value="Metallo-B-lactamas"/>
</dbReference>
<dbReference type="InterPro" id="IPR036866">
    <property type="entry name" value="RibonucZ/Hydroxyglut_hydro"/>
</dbReference>
<dbReference type="InterPro" id="IPR013471">
    <property type="entry name" value="RNase_Z/BN"/>
</dbReference>
<dbReference type="NCBIfam" id="NF000806">
    <property type="entry name" value="PRK00055.2-4"/>
    <property type="match status" value="1"/>
</dbReference>
<dbReference type="PANTHER" id="PTHR46018">
    <property type="entry name" value="ZINC PHOSPHODIESTERASE ELAC PROTEIN 1"/>
    <property type="match status" value="1"/>
</dbReference>
<dbReference type="PANTHER" id="PTHR46018:SF2">
    <property type="entry name" value="ZINC PHOSPHODIESTERASE ELAC PROTEIN 1"/>
    <property type="match status" value="1"/>
</dbReference>
<dbReference type="Pfam" id="PF12706">
    <property type="entry name" value="Lactamase_B_2"/>
    <property type="match status" value="1"/>
</dbReference>
<dbReference type="SMART" id="SM00849">
    <property type="entry name" value="Lactamase_B"/>
    <property type="match status" value="1"/>
</dbReference>
<dbReference type="SUPFAM" id="SSF56281">
    <property type="entry name" value="Metallo-hydrolase/oxidoreductase"/>
    <property type="match status" value="1"/>
</dbReference>
<sequence length="273" mass="28707">MLEITLLGTGSPIPDPDRAGPSTLVRAGAQAFLVDCGRGVLQRAAAVGVGAAGLSAVLLTHLHGDVLITSWVTNFAADPAPLPIIGPPGTAEVVEATLKAFGHDIGYRIAHHADLTTPPPIEVHEYTAGPAWDRDGVTIRVAPTDHRPVTPTIGFRIESDGASVVLAGDTVPCDSLDQLAAGADALVHTVIRKDIVTQIPQQRVKDICDYHSSVQEAAATANRAGVGTLVMTHYVPAIGPGQEEQWRALAATEFSGRIEVGNDLHRVEVHPRR</sequence>
<proteinExistence type="inferred from homology"/>